<proteinExistence type="inferred from homology"/>
<sequence length="179" mass="20302">MAKLHDYYKDEVVKKLMTEFNYNSVMQVPRVEKITLNMGVGEAIADKKLLDNAAADLAAISGQKPLITKARKSVAGFKIRQGYPIGCKVTLRGERMWEFFERLITIAVPRIRDFRGLSAKSFDGRGNYSMGVREQIIFPEIDYDKVDRVRGLDITITTTAKSDEEGRALLAAFDFPFRK</sequence>
<comment type="function">
    <text evidence="1">This is one of the proteins that bind and probably mediate the attachment of the 5S RNA into the large ribosomal subunit, where it forms part of the central protuberance. In the 70S ribosome it contacts protein S13 of the 30S subunit (bridge B1b), connecting the 2 subunits; this bridge is implicated in subunit movement. Contacts the P site tRNA; the 5S rRNA and some of its associated proteins might help stabilize positioning of ribosome-bound tRNAs.</text>
</comment>
<comment type="subunit">
    <text evidence="1">Part of the 50S ribosomal subunit; part of the 5S rRNA/L5/L18/L25 subcomplex. Contacts the 5S rRNA and the P site tRNA. Forms a bridge to the 30S subunit in the 70S ribosome.</text>
</comment>
<comment type="similarity">
    <text evidence="1">Belongs to the universal ribosomal protein uL5 family.</text>
</comment>
<organism>
    <name type="scientific">Escherichia coli O1:K1 / APEC</name>
    <dbReference type="NCBI Taxonomy" id="405955"/>
    <lineage>
        <taxon>Bacteria</taxon>
        <taxon>Pseudomonadati</taxon>
        <taxon>Pseudomonadota</taxon>
        <taxon>Gammaproteobacteria</taxon>
        <taxon>Enterobacterales</taxon>
        <taxon>Enterobacteriaceae</taxon>
        <taxon>Escherichia</taxon>
    </lineage>
</organism>
<accession>A1AGJ7</accession>
<protein>
    <recommendedName>
        <fullName evidence="1">Large ribosomal subunit protein uL5</fullName>
    </recommendedName>
    <alternativeName>
        <fullName evidence="2">50S ribosomal protein L5</fullName>
    </alternativeName>
</protein>
<feature type="chain" id="PRO_1000052730" description="Large ribosomal subunit protein uL5">
    <location>
        <begin position="1"/>
        <end position="179"/>
    </location>
</feature>
<feature type="modified residue" description="N6-acetyllysine" evidence="1">
    <location>
        <position position="3"/>
    </location>
</feature>
<name>RL5_ECOK1</name>
<evidence type="ECO:0000255" key="1">
    <source>
        <dbReference type="HAMAP-Rule" id="MF_01333"/>
    </source>
</evidence>
<evidence type="ECO:0000305" key="2"/>
<keyword id="KW-0007">Acetylation</keyword>
<keyword id="KW-1185">Reference proteome</keyword>
<keyword id="KW-0687">Ribonucleoprotein</keyword>
<keyword id="KW-0689">Ribosomal protein</keyword>
<keyword id="KW-0694">RNA-binding</keyword>
<keyword id="KW-0699">rRNA-binding</keyword>
<keyword id="KW-0820">tRNA-binding</keyword>
<gene>
    <name evidence="1" type="primary">rplE</name>
    <name type="ordered locus">Ecok1_32930</name>
    <name type="ORF">APECO1_3141</name>
</gene>
<dbReference type="EMBL" id="CP000468">
    <property type="protein sequence ID" value="ABJ02787.1"/>
    <property type="molecule type" value="Genomic_DNA"/>
</dbReference>
<dbReference type="RefSeq" id="WP_001096200.1">
    <property type="nucleotide sequence ID" value="NZ_CADILS010000044.1"/>
</dbReference>
<dbReference type="SMR" id="A1AGJ7"/>
<dbReference type="GeneID" id="93778679"/>
<dbReference type="KEGG" id="ecv:APECO1_3141"/>
<dbReference type="HOGENOM" id="CLU_061015_2_1_6"/>
<dbReference type="Proteomes" id="UP000008216">
    <property type="component" value="Chromosome"/>
</dbReference>
<dbReference type="GO" id="GO:1990904">
    <property type="term" value="C:ribonucleoprotein complex"/>
    <property type="evidence" value="ECO:0007669"/>
    <property type="project" value="UniProtKB-KW"/>
</dbReference>
<dbReference type="GO" id="GO:0005840">
    <property type="term" value="C:ribosome"/>
    <property type="evidence" value="ECO:0007669"/>
    <property type="project" value="UniProtKB-KW"/>
</dbReference>
<dbReference type="GO" id="GO:0019843">
    <property type="term" value="F:rRNA binding"/>
    <property type="evidence" value="ECO:0007669"/>
    <property type="project" value="UniProtKB-UniRule"/>
</dbReference>
<dbReference type="GO" id="GO:0003735">
    <property type="term" value="F:structural constituent of ribosome"/>
    <property type="evidence" value="ECO:0007669"/>
    <property type="project" value="InterPro"/>
</dbReference>
<dbReference type="GO" id="GO:0000049">
    <property type="term" value="F:tRNA binding"/>
    <property type="evidence" value="ECO:0007669"/>
    <property type="project" value="UniProtKB-UniRule"/>
</dbReference>
<dbReference type="GO" id="GO:0006412">
    <property type="term" value="P:translation"/>
    <property type="evidence" value="ECO:0007669"/>
    <property type="project" value="UniProtKB-UniRule"/>
</dbReference>
<dbReference type="FunFam" id="3.30.1440.10:FF:000001">
    <property type="entry name" value="50S ribosomal protein L5"/>
    <property type="match status" value="1"/>
</dbReference>
<dbReference type="Gene3D" id="3.30.1440.10">
    <property type="match status" value="1"/>
</dbReference>
<dbReference type="HAMAP" id="MF_01333_B">
    <property type="entry name" value="Ribosomal_uL5_B"/>
    <property type="match status" value="1"/>
</dbReference>
<dbReference type="InterPro" id="IPR002132">
    <property type="entry name" value="Ribosomal_uL5"/>
</dbReference>
<dbReference type="InterPro" id="IPR020930">
    <property type="entry name" value="Ribosomal_uL5_bac-type"/>
</dbReference>
<dbReference type="InterPro" id="IPR031309">
    <property type="entry name" value="Ribosomal_uL5_C"/>
</dbReference>
<dbReference type="InterPro" id="IPR020929">
    <property type="entry name" value="Ribosomal_uL5_CS"/>
</dbReference>
<dbReference type="InterPro" id="IPR022803">
    <property type="entry name" value="Ribosomal_uL5_dom_sf"/>
</dbReference>
<dbReference type="InterPro" id="IPR031310">
    <property type="entry name" value="Ribosomal_uL5_N"/>
</dbReference>
<dbReference type="NCBIfam" id="NF000585">
    <property type="entry name" value="PRK00010.1"/>
    <property type="match status" value="1"/>
</dbReference>
<dbReference type="PANTHER" id="PTHR11994">
    <property type="entry name" value="60S RIBOSOMAL PROTEIN L11-RELATED"/>
    <property type="match status" value="1"/>
</dbReference>
<dbReference type="Pfam" id="PF00281">
    <property type="entry name" value="Ribosomal_L5"/>
    <property type="match status" value="1"/>
</dbReference>
<dbReference type="Pfam" id="PF00673">
    <property type="entry name" value="Ribosomal_L5_C"/>
    <property type="match status" value="1"/>
</dbReference>
<dbReference type="PIRSF" id="PIRSF002161">
    <property type="entry name" value="Ribosomal_L5"/>
    <property type="match status" value="1"/>
</dbReference>
<dbReference type="SUPFAM" id="SSF55282">
    <property type="entry name" value="RL5-like"/>
    <property type="match status" value="1"/>
</dbReference>
<dbReference type="PROSITE" id="PS00358">
    <property type="entry name" value="RIBOSOMAL_L5"/>
    <property type="match status" value="1"/>
</dbReference>
<reference key="1">
    <citation type="journal article" date="2007" name="J. Bacteriol.">
        <title>The genome sequence of avian pathogenic Escherichia coli strain O1:K1:H7 shares strong similarities with human extraintestinal pathogenic E. coli genomes.</title>
        <authorList>
            <person name="Johnson T.J."/>
            <person name="Kariyawasam S."/>
            <person name="Wannemuehler Y."/>
            <person name="Mangiamele P."/>
            <person name="Johnson S.J."/>
            <person name="Doetkott C."/>
            <person name="Skyberg J.A."/>
            <person name="Lynne A.M."/>
            <person name="Johnson J.R."/>
            <person name="Nolan L.K."/>
        </authorList>
    </citation>
    <scope>NUCLEOTIDE SEQUENCE [LARGE SCALE GENOMIC DNA]</scope>
</reference>